<dbReference type="EMBL" id="BC133640">
    <property type="protein sequence ID" value="AAI33641.1"/>
    <property type="molecule type" value="mRNA"/>
</dbReference>
<dbReference type="RefSeq" id="NP_001075916.1">
    <property type="nucleotide sequence ID" value="NM_001082447.2"/>
</dbReference>
<dbReference type="SMR" id="A2VE99"/>
<dbReference type="FunCoup" id="A2VE99">
    <property type="interactions" value="2558"/>
</dbReference>
<dbReference type="STRING" id="9913.ENSBTAP00000066044"/>
<dbReference type="PaxDb" id="9913-ENSBTAP00000005626"/>
<dbReference type="GeneID" id="535746"/>
<dbReference type="KEGG" id="bta:535746"/>
<dbReference type="CTD" id="55752"/>
<dbReference type="VEuPathDB" id="HostDB:ENSBTAG00000021372"/>
<dbReference type="eggNOG" id="KOG3859">
    <property type="taxonomic scope" value="Eukaryota"/>
</dbReference>
<dbReference type="HOGENOM" id="CLU_017718_8_1_1"/>
<dbReference type="InParanoid" id="A2VE99"/>
<dbReference type="OMA" id="RNRTIMA"/>
<dbReference type="OrthoDB" id="416553at2759"/>
<dbReference type="TreeFam" id="TF101080"/>
<dbReference type="Proteomes" id="UP000009136">
    <property type="component" value="Chromosome 6"/>
</dbReference>
<dbReference type="Bgee" id="ENSBTAG00000021372">
    <property type="expression patterns" value="Expressed in conceptus and 111 other cell types or tissues"/>
</dbReference>
<dbReference type="GO" id="GO:0030424">
    <property type="term" value="C:axon"/>
    <property type="evidence" value="ECO:0007669"/>
    <property type="project" value="UniProtKB-SubCell"/>
</dbReference>
<dbReference type="GO" id="GO:0032153">
    <property type="term" value="C:cell division site"/>
    <property type="evidence" value="ECO:0000318"/>
    <property type="project" value="GO_Central"/>
</dbReference>
<dbReference type="GO" id="GO:0043197">
    <property type="term" value="C:dendritic spine"/>
    <property type="evidence" value="ECO:0007669"/>
    <property type="project" value="UniProtKB-SubCell"/>
</dbReference>
<dbReference type="GO" id="GO:0015630">
    <property type="term" value="C:microtubule cytoskeleton"/>
    <property type="evidence" value="ECO:0000318"/>
    <property type="project" value="GO_Central"/>
</dbReference>
<dbReference type="GO" id="GO:0031105">
    <property type="term" value="C:septin complex"/>
    <property type="evidence" value="ECO:0000250"/>
    <property type="project" value="UniProtKB"/>
</dbReference>
<dbReference type="GO" id="GO:0005940">
    <property type="term" value="C:septin ring"/>
    <property type="evidence" value="ECO:0000318"/>
    <property type="project" value="GO_Central"/>
</dbReference>
<dbReference type="GO" id="GO:0005525">
    <property type="term" value="F:GTP binding"/>
    <property type="evidence" value="ECO:0007669"/>
    <property type="project" value="UniProtKB-KW"/>
</dbReference>
<dbReference type="GO" id="GO:0003924">
    <property type="term" value="F:GTPase activity"/>
    <property type="evidence" value="ECO:0000318"/>
    <property type="project" value="GO_Central"/>
</dbReference>
<dbReference type="GO" id="GO:0060090">
    <property type="term" value="F:molecular adaptor activity"/>
    <property type="evidence" value="ECO:0000318"/>
    <property type="project" value="GO_Central"/>
</dbReference>
<dbReference type="GO" id="GO:0061640">
    <property type="term" value="P:cytoskeleton-dependent cytokinesis"/>
    <property type="evidence" value="ECO:0000318"/>
    <property type="project" value="GO_Central"/>
</dbReference>
<dbReference type="GO" id="GO:0008104">
    <property type="term" value="P:protein localization"/>
    <property type="evidence" value="ECO:0000318"/>
    <property type="project" value="GO_Central"/>
</dbReference>
<dbReference type="CDD" id="cd01850">
    <property type="entry name" value="CDC_Septin"/>
    <property type="match status" value="1"/>
</dbReference>
<dbReference type="FunFam" id="3.40.50.300:FF:000036">
    <property type="entry name" value="septin-6 isoform X2"/>
    <property type="match status" value="1"/>
</dbReference>
<dbReference type="Gene3D" id="3.40.50.300">
    <property type="entry name" value="P-loop containing nucleotide triphosphate hydrolases"/>
    <property type="match status" value="1"/>
</dbReference>
<dbReference type="InterPro" id="IPR030379">
    <property type="entry name" value="G_SEPTIN_dom"/>
</dbReference>
<dbReference type="InterPro" id="IPR027417">
    <property type="entry name" value="P-loop_NTPase"/>
</dbReference>
<dbReference type="InterPro" id="IPR016491">
    <property type="entry name" value="Septin"/>
</dbReference>
<dbReference type="PANTHER" id="PTHR18884">
    <property type="entry name" value="SEPTIN"/>
    <property type="match status" value="1"/>
</dbReference>
<dbReference type="Pfam" id="PF00735">
    <property type="entry name" value="Septin"/>
    <property type="match status" value="1"/>
</dbReference>
<dbReference type="PIRSF" id="PIRSF006698">
    <property type="entry name" value="Septin"/>
    <property type="match status" value="1"/>
</dbReference>
<dbReference type="SUPFAM" id="SSF52540">
    <property type="entry name" value="P-loop containing nucleoside triphosphate hydrolases"/>
    <property type="match status" value="1"/>
</dbReference>
<dbReference type="PROSITE" id="PS51719">
    <property type="entry name" value="G_SEPTIN"/>
    <property type="match status" value="1"/>
</dbReference>
<sequence length="425" mass="48992">MAVAVGRPSNEELRNLSLSGHVGFDSLPDQLVNKSTSQGFCFNILCVGETGIGKSTLMDTLFNTKFESDPATHNEPGVRLKARSYELQESNVRLKLTIVDTVGFGDQINKDDSYKPIVEYIDAQFEAYLQEELKIKRSLFNYHDTRIHACLYFIAPTGHSLKSLDLVTMKKLDSKVNIIPIIAKADTIAKNELHKFKSKIMSELVSNGVQIYQFPTDEETVAEINATMSVHLPFAVVGSTEEVKIGNKMAKARQYPWGVVQVENENHCDFVKLREMLIRVNMEDLREQTHTRHYELYRRCKLEEMGFKDTDPDSKPFSLQETYEAKRNEFLGELQKKEEEMRQMFVMRVKEKEAELKEAEKELHEKFDLLKRTHQEEKKKVEDKKKELEEEVNNFQKKKAAAQLLQSQAQQSGAQQTKKDKDKKN</sequence>
<protein>
    <recommendedName>
        <fullName>Septin-11</fullName>
    </recommendedName>
</protein>
<feature type="initiator methionine" description="Removed" evidence="2">
    <location>
        <position position="1"/>
    </location>
</feature>
<feature type="chain" id="PRO_0000312862" description="Septin-11">
    <location>
        <begin position="2"/>
        <end position="425"/>
    </location>
</feature>
<feature type="domain" description="Septin-type G" evidence="4">
    <location>
        <begin position="38"/>
        <end position="304"/>
    </location>
</feature>
<feature type="region of interest" description="G1 motif" evidence="4">
    <location>
        <begin position="48"/>
        <end position="55"/>
    </location>
</feature>
<feature type="region of interest" description="G3 motif" evidence="4">
    <location>
        <begin position="100"/>
        <end position="103"/>
    </location>
</feature>
<feature type="region of interest" description="G4 motif" evidence="4">
    <location>
        <begin position="183"/>
        <end position="186"/>
    </location>
</feature>
<feature type="region of interest" description="Disordered" evidence="5">
    <location>
        <begin position="399"/>
        <end position="425"/>
    </location>
</feature>
<feature type="coiled-coil region" evidence="3">
    <location>
        <begin position="320"/>
        <end position="410"/>
    </location>
</feature>
<feature type="compositionally biased region" description="Low complexity" evidence="5">
    <location>
        <begin position="401"/>
        <end position="416"/>
    </location>
</feature>
<feature type="binding site" evidence="1">
    <location>
        <begin position="48"/>
        <end position="55"/>
    </location>
    <ligand>
        <name>GTP</name>
        <dbReference type="ChEBI" id="CHEBI:37565"/>
    </ligand>
</feature>
<feature type="binding site" evidence="1">
    <location>
        <position position="103"/>
    </location>
    <ligand>
        <name>GTP</name>
        <dbReference type="ChEBI" id="CHEBI:37565"/>
    </ligand>
</feature>
<feature type="binding site" evidence="1">
    <location>
        <begin position="184"/>
        <end position="192"/>
    </location>
    <ligand>
        <name>GTP</name>
        <dbReference type="ChEBI" id="CHEBI:37565"/>
    </ligand>
</feature>
<feature type="binding site" evidence="1">
    <location>
        <position position="238"/>
    </location>
    <ligand>
        <name>GTP</name>
        <dbReference type="ChEBI" id="CHEBI:37565"/>
    </ligand>
</feature>
<feature type="binding site" evidence="1">
    <location>
        <position position="253"/>
    </location>
    <ligand>
        <name>GTP</name>
        <dbReference type="ChEBI" id="CHEBI:37565"/>
    </ligand>
</feature>
<feature type="modified residue" description="N-acetylalanine" evidence="2">
    <location>
        <position position="2"/>
    </location>
</feature>
<feature type="modified residue" description="Phosphoserine" evidence="2">
    <location>
        <position position="9"/>
    </location>
</feature>
<name>SEP11_BOVIN</name>
<comment type="function">
    <text evidence="1 6">Filament-forming cytoskeletal GTPase (By similarity). May play a role in cytokinesis (Potential). May play a role in the cytoarchitecture of neurons, including dendritic arborization and dendritic spines, and in GABAergic synaptic connectivity (By similarity).</text>
</comment>
<comment type="subunit">
    <text evidence="2">Septins polymerize into heterooligomeric protein complexes that form filaments, and can associate with cellular membranes, actin filaments and microtubules (By similarity). Forms homooligomers (By similarity). GTPase activity is required for filament formation (By similarity). Interacts with SEPTIN7, SEPTIN9 and SEPTIN12 (By similarity).</text>
</comment>
<comment type="subcellular location">
    <subcellularLocation>
        <location>Cytoplasm</location>
        <location>Cytoskeleton</location>
    </subcellularLocation>
    <subcellularLocation>
        <location>Synapse</location>
    </subcellularLocation>
    <subcellularLocation>
        <location>Cell projection</location>
        <location>Dendritic spine</location>
    </subcellularLocation>
    <subcellularLocation>
        <location evidence="1">Cell projection</location>
        <location evidence="1">Axon</location>
    </subcellularLocation>
</comment>
<comment type="similarity">
    <text evidence="4">Belongs to the TRAFAC class TrmE-Era-EngA-EngB-Septin-like GTPase superfamily. Septin GTPase family.</text>
</comment>
<keyword id="KW-0007">Acetylation</keyword>
<keyword id="KW-0131">Cell cycle</keyword>
<keyword id="KW-0132">Cell division</keyword>
<keyword id="KW-0966">Cell projection</keyword>
<keyword id="KW-0175">Coiled coil</keyword>
<keyword id="KW-0963">Cytoplasm</keyword>
<keyword id="KW-0206">Cytoskeleton</keyword>
<keyword id="KW-0342">GTP-binding</keyword>
<keyword id="KW-0547">Nucleotide-binding</keyword>
<keyword id="KW-0597">Phosphoprotein</keyword>
<keyword id="KW-1185">Reference proteome</keyword>
<keyword id="KW-0770">Synapse</keyword>
<reference key="1">
    <citation type="submission" date="2007-02" db="EMBL/GenBank/DDBJ databases">
        <authorList>
            <consortium name="NIH - Mammalian Gene Collection (MGC) project"/>
        </authorList>
    </citation>
    <scope>NUCLEOTIDE SEQUENCE [LARGE SCALE MRNA]</scope>
    <source>
        <strain>Hereford</strain>
        <tissue>Fetal spinal cord</tissue>
    </source>
</reference>
<proteinExistence type="evidence at transcript level"/>
<accession>A2VE99</accession>
<gene>
    <name evidence="2" type="primary">SEPTIN11</name>
    <name type="synonym">SEPT11</name>
</gene>
<organism>
    <name type="scientific">Bos taurus</name>
    <name type="common">Bovine</name>
    <dbReference type="NCBI Taxonomy" id="9913"/>
    <lineage>
        <taxon>Eukaryota</taxon>
        <taxon>Metazoa</taxon>
        <taxon>Chordata</taxon>
        <taxon>Craniata</taxon>
        <taxon>Vertebrata</taxon>
        <taxon>Euteleostomi</taxon>
        <taxon>Mammalia</taxon>
        <taxon>Eutheria</taxon>
        <taxon>Laurasiatheria</taxon>
        <taxon>Artiodactyla</taxon>
        <taxon>Ruminantia</taxon>
        <taxon>Pecora</taxon>
        <taxon>Bovidae</taxon>
        <taxon>Bovinae</taxon>
        <taxon>Bos</taxon>
    </lineage>
</organism>
<evidence type="ECO:0000250" key="1"/>
<evidence type="ECO:0000250" key="2">
    <source>
        <dbReference type="UniProtKB" id="Q9NVA2"/>
    </source>
</evidence>
<evidence type="ECO:0000255" key="3"/>
<evidence type="ECO:0000255" key="4">
    <source>
        <dbReference type="PROSITE-ProRule" id="PRU01056"/>
    </source>
</evidence>
<evidence type="ECO:0000256" key="5">
    <source>
        <dbReference type="SAM" id="MobiDB-lite"/>
    </source>
</evidence>
<evidence type="ECO:0000305" key="6"/>